<dbReference type="EC" id="4.2.1.20" evidence="1"/>
<dbReference type="EMBL" id="CP000283">
    <property type="protein sequence ID" value="ABE37438.1"/>
    <property type="molecule type" value="Genomic_DNA"/>
</dbReference>
<dbReference type="SMR" id="Q13EQ1"/>
<dbReference type="STRING" id="316057.RPD_0198"/>
<dbReference type="KEGG" id="rpd:RPD_0198"/>
<dbReference type="eggNOG" id="COG0159">
    <property type="taxonomic scope" value="Bacteria"/>
</dbReference>
<dbReference type="HOGENOM" id="CLU_016734_0_0_5"/>
<dbReference type="BioCyc" id="RPAL316057:RPD_RS01005-MONOMER"/>
<dbReference type="UniPathway" id="UPA00035">
    <property type="reaction ID" value="UER00044"/>
</dbReference>
<dbReference type="Proteomes" id="UP000001818">
    <property type="component" value="Chromosome"/>
</dbReference>
<dbReference type="GO" id="GO:0005829">
    <property type="term" value="C:cytosol"/>
    <property type="evidence" value="ECO:0007669"/>
    <property type="project" value="TreeGrafter"/>
</dbReference>
<dbReference type="GO" id="GO:0004834">
    <property type="term" value="F:tryptophan synthase activity"/>
    <property type="evidence" value="ECO:0007669"/>
    <property type="project" value="UniProtKB-UniRule"/>
</dbReference>
<dbReference type="CDD" id="cd04724">
    <property type="entry name" value="Tryptophan_synthase_alpha"/>
    <property type="match status" value="1"/>
</dbReference>
<dbReference type="FunFam" id="3.20.20.70:FF:000037">
    <property type="entry name" value="Tryptophan synthase alpha chain"/>
    <property type="match status" value="1"/>
</dbReference>
<dbReference type="Gene3D" id="3.20.20.70">
    <property type="entry name" value="Aldolase class I"/>
    <property type="match status" value="1"/>
</dbReference>
<dbReference type="HAMAP" id="MF_00131">
    <property type="entry name" value="Trp_synth_alpha"/>
    <property type="match status" value="1"/>
</dbReference>
<dbReference type="InterPro" id="IPR013785">
    <property type="entry name" value="Aldolase_TIM"/>
</dbReference>
<dbReference type="InterPro" id="IPR011060">
    <property type="entry name" value="RibuloseP-bd_barrel"/>
</dbReference>
<dbReference type="InterPro" id="IPR018204">
    <property type="entry name" value="Trp_synthase_alpha_AS"/>
</dbReference>
<dbReference type="InterPro" id="IPR002028">
    <property type="entry name" value="Trp_synthase_suA"/>
</dbReference>
<dbReference type="NCBIfam" id="TIGR00262">
    <property type="entry name" value="trpA"/>
    <property type="match status" value="1"/>
</dbReference>
<dbReference type="PANTHER" id="PTHR43406:SF1">
    <property type="entry name" value="TRYPTOPHAN SYNTHASE ALPHA CHAIN, CHLOROPLASTIC"/>
    <property type="match status" value="1"/>
</dbReference>
<dbReference type="PANTHER" id="PTHR43406">
    <property type="entry name" value="TRYPTOPHAN SYNTHASE, ALPHA CHAIN"/>
    <property type="match status" value="1"/>
</dbReference>
<dbReference type="Pfam" id="PF00290">
    <property type="entry name" value="Trp_syntA"/>
    <property type="match status" value="1"/>
</dbReference>
<dbReference type="SUPFAM" id="SSF51366">
    <property type="entry name" value="Ribulose-phoshate binding barrel"/>
    <property type="match status" value="1"/>
</dbReference>
<dbReference type="PROSITE" id="PS00167">
    <property type="entry name" value="TRP_SYNTHASE_ALPHA"/>
    <property type="match status" value="1"/>
</dbReference>
<gene>
    <name evidence="1" type="primary">trpA</name>
    <name type="ordered locus">RPD_0198</name>
</gene>
<protein>
    <recommendedName>
        <fullName evidence="1">Tryptophan synthase alpha chain</fullName>
        <ecNumber evidence="1">4.2.1.20</ecNumber>
    </recommendedName>
</protein>
<evidence type="ECO:0000255" key="1">
    <source>
        <dbReference type="HAMAP-Rule" id="MF_00131"/>
    </source>
</evidence>
<reference key="1">
    <citation type="submission" date="2006-03" db="EMBL/GenBank/DDBJ databases">
        <title>Complete sequence of Rhodopseudomonas palustris BisB5.</title>
        <authorList>
            <consortium name="US DOE Joint Genome Institute"/>
            <person name="Copeland A."/>
            <person name="Lucas S."/>
            <person name="Lapidus A."/>
            <person name="Barry K."/>
            <person name="Detter J.C."/>
            <person name="Glavina del Rio T."/>
            <person name="Hammon N."/>
            <person name="Israni S."/>
            <person name="Dalin E."/>
            <person name="Tice H."/>
            <person name="Pitluck S."/>
            <person name="Chain P."/>
            <person name="Malfatti S."/>
            <person name="Shin M."/>
            <person name="Vergez L."/>
            <person name="Schmutz J."/>
            <person name="Larimer F."/>
            <person name="Land M."/>
            <person name="Hauser L."/>
            <person name="Pelletier D.A."/>
            <person name="Kyrpides N."/>
            <person name="Lykidis A."/>
            <person name="Oda Y."/>
            <person name="Harwood C.S."/>
            <person name="Richardson P."/>
        </authorList>
    </citation>
    <scope>NUCLEOTIDE SEQUENCE [LARGE SCALE GENOMIC DNA]</scope>
    <source>
        <strain>BisB5</strain>
    </source>
</reference>
<comment type="function">
    <text evidence="1">The alpha subunit is responsible for the aldol cleavage of indoleglycerol phosphate to indole and glyceraldehyde 3-phosphate.</text>
</comment>
<comment type="catalytic activity">
    <reaction evidence="1">
        <text>(1S,2R)-1-C-(indol-3-yl)glycerol 3-phosphate + L-serine = D-glyceraldehyde 3-phosphate + L-tryptophan + H2O</text>
        <dbReference type="Rhea" id="RHEA:10532"/>
        <dbReference type="ChEBI" id="CHEBI:15377"/>
        <dbReference type="ChEBI" id="CHEBI:33384"/>
        <dbReference type="ChEBI" id="CHEBI:57912"/>
        <dbReference type="ChEBI" id="CHEBI:58866"/>
        <dbReference type="ChEBI" id="CHEBI:59776"/>
        <dbReference type="EC" id="4.2.1.20"/>
    </reaction>
</comment>
<comment type="pathway">
    <text evidence="1">Amino-acid biosynthesis; L-tryptophan biosynthesis; L-tryptophan from chorismate: step 5/5.</text>
</comment>
<comment type="subunit">
    <text evidence="1">Tetramer of two alpha and two beta chains.</text>
</comment>
<comment type="similarity">
    <text evidence="1">Belongs to the TrpA family.</text>
</comment>
<accession>Q13EQ1</accession>
<keyword id="KW-0028">Amino-acid biosynthesis</keyword>
<keyword id="KW-0057">Aromatic amino acid biosynthesis</keyword>
<keyword id="KW-0456">Lyase</keyword>
<keyword id="KW-0822">Tryptophan biosynthesis</keyword>
<name>TRPA_RHOPS</name>
<organism>
    <name type="scientific">Rhodopseudomonas palustris (strain BisB5)</name>
    <dbReference type="NCBI Taxonomy" id="316057"/>
    <lineage>
        <taxon>Bacteria</taxon>
        <taxon>Pseudomonadati</taxon>
        <taxon>Pseudomonadota</taxon>
        <taxon>Alphaproteobacteria</taxon>
        <taxon>Hyphomicrobiales</taxon>
        <taxon>Nitrobacteraceae</taxon>
        <taxon>Rhodopseudomonas</taxon>
    </lineage>
</organism>
<proteinExistence type="inferred from homology"/>
<feature type="chain" id="PRO_1000018270" description="Tryptophan synthase alpha chain">
    <location>
        <begin position="1"/>
        <end position="278"/>
    </location>
</feature>
<feature type="active site" description="Proton acceptor" evidence="1">
    <location>
        <position position="50"/>
    </location>
</feature>
<feature type="active site" description="Proton acceptor" evidence="1">
    <location>
        <position position="61"/>
    </location>
</feature>
<sequence length="278" mass="28747">MTTRIDTRFAELKKQGRSAFVTFVMAGDPDLATSLQVLKALPAAGADIIEIGMPFTDPMADGPAIQAAGLRALHSGATLSHTLGLVRDFRKDDDTTPMVLMGYYNPIYIYGVDAFLADAKAAGVDGLIIVDLPPEEDSELCLPAMKAGLNFIRLATPTTDEKRLPAVLANTSGFVYYVSITGITGSASADSAAVGDAVARIKRHTDLPVCVGFGIRTPEAARAIAAEADGAVVGSALIDALQKSLDADNRATKATVGAVADLVASLAAGVRGAKQAAE</sequence>